<organism>
    <name type="scientific">Mus musculus</name>
    <name type="common">Mouse</name>
    <dbReference type="NCBI Taxonomy" id="10090"/>
    <lineage>
        <taxon>Eukaryota</taxon>
        <taxon>Metazoa</taxon>
        <taxon>Chordata</taxon>
        <taxon>Craniata</taxon>
        <taxon>Vertebrata</taxon>
        <taxon>Euteleostomi</taxon>
        <taxon>Mammalia</taxon>
        <taxon>Eutheria</taxon>
        <taxon>Euarchontoglires</taxon>
        <taxon>Glires</taxon>
        <taxon>Rodentia</taxon>
        <taxon>Myomorpha</taxon>
        <taxon>Muroidea</taxon>
        <taxon>Muridae</taxon>
        <taxon>Murinae</taxon>
        <taxon>Mus</taxon>
        <taxon>Mus</taxon>
    </lineage>
</organism>
<sequence>MWRVRKRGYFGIWSFPLIIAAVCAQSVNDPSNMSLVKETVDRLLKGYDIRLRPDFGGPPVAVGMNIDIASIDMVSEVNMDYTLTMYFQQAWRDKRLSYNVIPLNLTLDNRVADQLWVPDTYFLNDKKSFVHGVTVKNRMIRLHPDGTVLYGLRITTTAACMMDLRRYPLDEQNCTLEIESYGYTTDDIEFYWRGDDNAVTGVTKIELPQFSIVDYKLITKKVVFSTGSYPRLSLSFKLKRNIGYFILQTYMPSILITILSWVSFWINYDASAARVALGITTVLTMTTINTHLRETLPKIPYVKAIDMYLMGCFVFVFMALLEYALVNYIFFGRGPQRQKKAAEKAANANNEKMRLDVNKMFYKDIKQNGTQYRSLWDPTGDLSPTRRTTNYDFSLYTMDPHENILLSTLEIKNEMATSEAVMGLGDPRSTMLAYDASSIQYRKAGLPRHSFGRNALERHVAQKKSRLRRRASQLKITIPDLTDVNAIDRWSRIFFPVVFSFFNIVYWLYYVN</sequence>
<feature type="signal peptide" evidence="1">
    <location>
        <begin position="1"/>
        <end position="25"/>
    </location>
</feature>
<feature type="chain" id="PRO_0000000460" description="Gamma-aminobutyric acid receptor subunit beta-2">
    <location>
        <begin position="26"/>
        <end position="512"/>
    </location>
</feature>
<feature type="topological domain" description="Extracellular" evidence="13">
    <location>
        <begin position="26"/>
        <end position="244"/>
    </location>
</feature>
<feature type="transmembrane region" description="Helical" evidence="13">
    <location>
        <begin position="245"/>
        <end position="266"/>
    </location>
</feature>
<feature type="transmembrane region" description="Helical" evidence="13">
    <location>
        <begin position="270"/>
        <end position="292"/>
    </location>
</feature>
<feature type="transmembrane region" description="Helical" evidence="13">
    <location>
        <begin position="304"/>
        <end position="326"/>
    </location>
</feature>
<feature type="topological domain" description="Cytoplasmic" evidence="13">
    <location>
        <begin position="327"/>
        <end position="489"/>
    </location>
</feature>
<feature type="transmembrane region" description="Helical" evidence="13">
    <location>
        <begin position="490"/>
        <end position="511"/>
    </location>
</feature>
<feature type="binding site" description="in chain B" evidence="5">
    <location>
        <position position="121"/>
    </location>
    <ligand>
        <name>histamine</name>
        <dbReference type="ChEBI" id="CHEBI:58432"/>
        <note>ligand shared between two neighboring beta subunits</note>
    </ligand>
</feature>
<feature type="binding site" description="in chain B" evidence="5">
    <location>
        <begin position="180"/>
        <end position="181"/>
    </location>
    <ligand>
        <name>histamine</name>
        <dbReference type="ChEBI" id="CHEBI:58432"/>
        <note>ligand shared between two neighboring beta subunits</note>
    </ligand>
</feature>
<feature type="binding site" evidence="4">
    <location>
        <position position="181"/>
    </location>
    <ligand>
        <name>4-aminobutanoate</name>
        <dbReference type="ChEBI" id="CHEBI:59888"/>
        <note>ligand shared with the neighboring alpha subunit</note>
    </ligand>
</feature>
<feature type="binding site" evidence="6">
    <location>
        <position position="226"/>
    </location>
    <ligand>
        <name>4-aminobutanoate</name>
        <dbReference type="ChEBI" id="CHEBI:59888"/>
        <note>ligand shared with the neighboring alpha subunit</note>
    </ligand>
</feature>
<feature type="binding site" description="in chain B" evidence="5">
    <location>
        <position position="226"/>
    </location>
    <ligand>
        <name>histamine</name>
        <dbReference type="ChEBI" id="CHEBI:58432"/>
        <note>ligand shared between two neighboring beta subunits</note>
    </ligand>
</feature>
<feature type="modified residue" description="Phosphotyrosine" evidence="15">
    <location>
        <position position="441"/>
    </location>
</feature>
<feature type="glycosylation site" description="N-linked (GlcNAc...) asparagine" evidence="8">
    <location>
        <position position="32"/>
    </location>
</feature>
<feature type="glycosylation site" description="N-linked (GlcNAc...) asparagine" evidence="8">
    <location>
        <position position="104"/>
    </location>
</feature>
<feature type="glycosylation site" description="N-linked (GlcNAc...) asparagine" evidence="8">
    <location>
        <position position="173"/>
    </location>
</feature>
<feature type="disulfide bond" evidence="6">
    <location>
        <begin position="160"/>
        <end position="174"/>
    </location>
</feature>
<feature type="splice variant" id="VSP_038829" description="In isoform 2." evidence="10 11 12">
    <location>
        <begin position="360"/>
        <end position="397"/>
    </location>
</feature>
<feature type="helix" evidence="16">
    <location>
        <begin position="31"/>
        <end position="44"/>
    </location>
</feature>
<feature type="turn" evidence="16">
    <location>
        <begin position="53"/>
        <end position="56"/>
    </location>
</feature>
<feature type="strand" evidence="16">
    <location>
        <begin position="60"/>
        <end position="75"/>
    </location>
</feature>
<feature type="turn" evidence="16">
    <location>
        <begin position="76"/>
        <end position="79"/>
    </location>
</feature>
<feature type="strand" evidence="16">
    <location>
        <begin position="80"/>
        <end position="91"/>
    </location>
</feature>
<feature type="helix" evidence="16">
    <location>
        <begin position="109"/>
        <end position="114"/>
    </location>
</feature>
<feature type="strand" evidence="16">
    <location>
        <begin position="120"/>
        <end position="122"/>
    </location>
</feature>
<feature type="strand" evidence="16">
    <location>
        <begin position="125"/>
        <end position="130"/>
    </location>
</feature>
<feature type="strand" evidence="16">
    <location>
        <begin position="133"/>
        <end position="135"/>
    </location>
</feature>
<feature type="strand" evidence="16">
    <location>
        <begin position="144"/>
        <end position="146"/>
    </location>
</feature>
<feature type="strand" evidence="16">
    <location>
        <begin position="148"/>
        <end position="158"/>
    </location>
</feature>
<feature type="turn" evidence="16">
    <location>
        <begin position="165"/>
        <end position="168"/>
    </location>
</feature>
<feature type="strand" evidence="16">
    <location>
        <begin position="171"/>
        <end position="182"/>
    </location>
</feature>
<feature type="turn" evidence="16">
    <location>
        <begin position="185"/>
        <end position="187"/>
    </location>
</feature>
<feature type="strand" evidence="16">
    <location>
        <begin position="188"/>
        <end position="192"/>
    </location>
</feature>
<feature type="helix" evidence="16">
    <location>
        <begin position="195"/>
        <end position="197"/>
    </location>
</feature>
<feature type="strand" evidence="16">
    <location>
        <begin position="198"/>
        <end position="201"/>
    </location>
</feature>
<feature type="turn" evidence="16">
    <location>
        <begin position="202"/>
        <end position="204"/>
    </location>
</feature>
<feature type="strand" evidence="16">
    <location>
        <begin position="208"/>
        <end position="223"/>
    </location>
</feature>
<feature type="strand" evidence="16">
    <location>
        <begin position="228"/>
        <end position="240"/>
    </location>
</feature>
<feature type="helix" evidence="16">
    <location>
        <begin position="242"/>
        <end position="248"/>
    </location>
</feature>
<feature type="helix" evidence="16">
    <location>
        <begin position="250"/>
        <end position="265"/>
    </location>
</feature>
<feature type="helix" evidence="16">
    <location>
        <begin position="271"/>
        <end position="292"/>
    </location>
</feature>
<feature type="turn" evidence="16">
    <location>
        <begin position="293"/>
        <end position="295"/>
    </location>
</feature>
<feature type="helix" evidence="16">
    <location>
        <begin position="304"/>
        <end position="331"/>
    </location>
</feature>
<feature type="helix" evidence="16">
    <location>
        <begin position="483"/>
        <end position="510"/>
    </location>
</feature>
<evidence type="ECO:0000250" key="1"/>
<evidence type="ECO:0000250" key="2">
    <source>
        <dbReference type="UniProtKB" id="P08219"/>
    </source>
</evidence>
<evidence type="ECO:0000250" key="3">
    <source>
        <dbReference type="UniProtKB" id="P0C2W5"/>
    </source>
</evidence>
<evidence type="ECO:0000250" key="4">
    <source>
        <dbReference type="UniProtKB" id="P15431"/>
    </source>
</evidence>
<evidence type="ECO:0000250" key="5">
    <source>
        <dbReference type="UniProtKB" id="P28472"/>
    </source>
</evidence>
<evidence type="ECO:0000250" key="6">
    <source>
        <dbReference type="UniProtKB" id="P47870"/>
    </source>
</evidence>
<evidence type="ECO:0000250" key="7">
    <source>
        <dbReference type="UniProtKB" id="P63138"/>
    </source>
</evidence>
<evidence type="ECO:0000255" key="8"/>
<evidence type="ECO:0000269" key="9">
    <source>
    </source>
</evidence>
<evidence type="ECO:0000303" key="10">
    <source>
    </source>
</evidence>
<evidence type="ECO:0000303" key="11">
    <source>
    </source>
</evidence>
<evidence type="ECO:0000303" key="12">
    <source>
    </source>
</evidence>
<evidence type="ECO:0000305" key="13"/>
<evidence type="ECO:0000312" key="14">
    <source>
        <dbReference type="MGI" id="MGI:95620"/>
    </source>
</evidence>
<evidence type="ECO:0007744" key="15">
    <source>
    </source>
</evidence>
<evidence type="ECO:0007829" key="16">
    <source>
        <dbReference type="PDB" id="8G4O"/>
    </source>
</evidence>
<comment type="function">
    <text evidence="2 6 7 9">Beta subunit of the heteropentameric ligand-gated chloride channel gated by gamma-aminobutyric acid (GABA), a major inhibitory neurotransmitter in the brain (PubMed:27129275). GABA-gated chloride channels, also named GABA(A) receptors (GABAAR), consist of five subunits arranged around a central pore and contain GABA active binding site(s) located at the alpha and beta subunit interface(s) (By similarity). When activated by GABA, GABAARs selectively allow the flow of chloride anions across the cell membrane down their electrochemical gradient (By similarity). Chloride influx into the postsynaptic neuron following GABAAR opening decreases the neuron ability to generate a new action potential, thereby reducing nerve transmission (By similarity). GABAARs containing alpha-1 and beta-2 or -3 subunits exhibit synaptogenic activity; the gamma-2 subunit being necessary but not sufficient to induce rapid synaptic contacts formation (PubMed:27129275). Extrasynaptic beta-2 receptors contribute to the tonic GABAergic inhibition (By similarity). Beta-containing GABAARs can simultaneously bind GABA and histamine where histamine binds at the interface of two neighboring beta subunits, which may be involved in the regulation of sleep and wakefulness (By similarity).</text>
</comment>
<comment type="catalytic activity">
    <reaction evidence="2">
        <text>chloride(in) = chloride(out)</text>
        <dbReference type="Rhea" id="RHEA:29823"/>
        <dbReference type="ChEBI" id="CHEBI:17996"/>
    </reaction>
</comment>
<comment type="activity regulation">
    <text evidence="3 6 7">Allosterically activated by benzodiazepines and the anesthetic etomidate (By similarity). Inhibited by the antagonist bicuculline (By similarity). Potentiated by histamine (By similarity).</text>
</comment>
<comment type="subunit">
    <text evidence="7">Heteropentamer, formed by a combination of alpha (GABRA1-6), beta (GABRB1-3), gamma (GABRG1-3), delta (GABRD), epsilon (GABRE), rho (GABRR1-3), pi (GABRP) and theta (GABRQ) chains, each subunit exhibiting distinct physiological and pharmacological properties (By similarity). Interacts with UBQLN1 (By similarity). May interact with KIF21B (By similarity). Identified in a complex of 720 kDa composed of LHFPL4, NLGN2, GABRA1, GABRB2, GABRG2 and GABRB3 (By similarity).</text>
</comment>
<comment type="subcellular location">
    <subcellularLocation>
        <location evidence="7">Postsynaptic cell membrane</location>
        <topology evidence="6">Multi-pass membrane protein</topology>
    </subcellularLocation>
    <subcellularLocation>
        <location evidence="7">Cell membrane</location>
        <topology evidence="6">Multi-pass membrane protein</topology>
    </subcellularLocation>
    <subcellularLocation>
        <location evidence="7">Cytoplasmic vesicle</location>
    </subcellularLocation>
</comment>
<comment type="alternative products">
    <event type="alternative splicing"/>
    <isoform>
        <id>P63137-1</id>
        <name>1</name>
        <name>Long</name>
        <sequence type="displayed"/>
    </isoform>
    <isoform>
        <id>P63137-2</id>
        <name>2</name>
        <name>Short</name>
        <sequence type="described" ref="VSP_038829"/>
    </isoform>
</comment>
<comment type="domain">
    <text evidence="9">The extracellular domain contributes to synaptic contact formation.</text>
</comment>
<comment type="domain">
    <text evidence="6">GABAARs subunits share a common topological structure: a peptide sequence made up of a long extracellular N-terminal, four transmembrane domains, intracellular or cytoplasmic domain located between the third and the fourth transmembrane domains.</text>
</comment>
<comment type="PTM">
    <text evidence="9">Glycosylated.</text>
</comment>
<comment type="similarity">
    <text evidence="13">Belongs to the ligand-gated ion channel (TC 1.A.9) family. Gamma-aminobutyric acid receptor (TC 1.A.9.5) subfamily. GABRB2 sub-subfamily.</text>
</comment>
<gene>
    <name evidence="14" type="primary">Gabrb2</name>
    <name type="synonym">Gabrb-2</name>
</gene>
<protein>
    <recommendedName>
        <fullName evidence="6">Gamma-aminobutyric acid receptor subunit beta-2</fullName>
    </recommendedName>
    <alternativeName>
        <fullName>GABA(A) receptor subunit beta-2</fullName>
        <shortName evidence="6">GABAAR subunit beta-2</shortName>
    </alternativeName>
</protein>
<accession>P63137</accession>
<accession>A6H6R7</accession>
<accession>D1LYT3</accession>
<accession>P15432</accession>
<proteinExistence type="evidence at protein level"/>
<name>GBRB2_MOUSE</name>
<reference key="1">
    <citation type="journal article" date="1995" name="Biochim. Biophys. Acta">
        <title>GABAA receptor beta 1, beta 2, and beta 3 subunits: comparisons in DBA/2J and C57BL/6J mice.</title>
        <authorList>
            <person name="Kamatchi G.L."/>
            <person name="Kofuji P."/>
            <person name="Wang J.B."/>
            <person name="Fernando J.C."/>
            <person name="Liu Z."/>
            <person name="Mathura J.R."/>
            <person name="Burt D.R."/>
        </authorList>
    </citation>
    <scope>NUCLEOTIDE SEQUENCE [MRNA] (ISOFORM 2)</scope>
    <source>
        <strain>C57BL/6J</strain>
        <strain>DBA/2J</strain>
        <tissue>Brain</tissue>
    </source>
</reference>
<reference key="2">
    <citation type="journal article" date="2009" name="PLoS ONE">
        <title>Alternative-splicing in the exon-10 region of GABA(A) receptor beta(2) subunit gene: relationships between novel isoforms and psychotic disorders.</title>
        <authorList>
            <person name="Zhao C."/>
            <person name="Xu Z."/>
            <person name="Wang F."/>
            <person name="Chen J."/>
            <person name="Ng S.K."/>
            <person name="Wong P.W."/>
            <person name="Yu Z."/>
            <person name="Pun F.W."/>
            <person name="Ren L."/>
            <person name="Lo W.S."/>
            <person name="Tsang S.Y."/>
            <person name="Xue H."/>
        </authorList>
    </citation>
    <scope>NUCLEOTIDE SEQUENCE [MRNA] (ISOFORM 1)</scope>
</reference>
<reference key="3">
    <citation type="journal article" date="2005" name="Science">
        <title>The transcriptional landscape of the mammalian genome.</title>
        <authorList>
            <person name="Carninci P."/>
            <person name="Kasukawa T."/>
            <person name="Katayama S."/>
            <person name="Gough J."/>
            <person name="Frith M.C."/>
            <person name="Maeda N."/>
            <person name="Oyama R."/>
            <person name="Ravasi T."/>
            <person name="Lenhard B."/>
            <person name="Wells C."/>
            <person name="Kodzius R."/>
            <person name="Shimokawa K."/>
            <person name="Bajic V.B."/>
            <person name="Brenner S.E."/>
            <person name="Batalov S."/>
            <person name="Forrest A.R."/>
            <person name="Zavolan M."/>
            <person name="Davis M.J."/>
            <person name="Wilming L.G."/>
            <person name="Aidinis V."/>
            <person name="Allen J.E."/>
            <person name="Ambesi-Impiombato A."/>
            <person name="Apweiler R."/>
            <person name="Aturaliya R.N."/>
            <person name="Bailey T.L."/>
            <person name="Bansal M."/>
            <person name="Baxter L."/>
            <person name="Beisel K.W."/>
            <person name="Bersano T."/>
            <person name="Bono H."/>
            <person name="Chalk A.M."/>
            <person name="Chiu K.P."/>
            <person name="Choudhary V."/>
            <person name="Christoffels A."/>
            <person name="Clutterbuck D.R."/>
            <person name="Crowe M.L."/>
            <person name="Dalla E."/>
            <person name="Dalrymple B.P."/>
            <person name="de Bono B."/>
            <person name="Della Gatta G."/>
            <person name="di Bernardo D."/>
            <person name="Down T."/>
            <person name="Engstrom P."/>
            <person name="Fagiolini M."/>
            <person name="Faulkner G."/>
            <person name="Fletcher C.F."/>
            <person name="Fukushima T."/>
            <person name="Furuno M."/>
            <person name="Futaki S."/>
            <person name="Gariboldi M."/>
            <person name="Georgii-Hemming P."/>
            <person name="Gingeras T.R."/>
            <person name="Gojobori T."/>
            <person name="Green R.E."/>
            <person name="Gustincich S."/>
            <person name="Harbers M."/>
            <person name="Hayashi Y."/>
            <person name="Hensch T.K."/>
            <person name="Hirokawa N."/>
            <person name="Hill D."/>
            <person name="Huminiecki L."/>
            <person name="Iacono M."/>
            <person name="Ikeo K."/>
            <person name="Iwama A."/>
            <person name="Ishikawa T."/>
            <person name="Jakt M."/>
            <person name="Kanapin A."/>
            <person name="Katoh M."/>
            <person name="Kawasawa Y."/>
            <person name="Kelso J."/>
            <person name="Kitamura H."/>
            <person name="Kitano H."/>
            <person name="Kollias G."/>
            <person name="Krishnan S.P."/>
            <person name="Kruger A."/>
            <person name="Kummerfeld S.K."/>
            <person name="Kurochkin I.V."/>
            <person name="Lareau L.F."/>
            <person name="Lazarevic D."/>
            <person name="Lipovich L."/>
            <person name="Liu J."/>
            <person name="Liuni S."/>
            <person name="McWilliam S."/>
            <person name="Madan Babu M."/>
            <person name="Madera M."/>
            <person name="Marchionni L."/>
            <person name="Matsuda H."/>
            <person name="Matsuzawa S."/>
            <person name="Miki H."/>
            <person name="Mignone F."/>
            <person name="Miyake S."/>
            <person name="Morris K."/>
            <person name="Mottagui-Tabar S."/>
            <person name="Mulder N."/>
            <person name="Nakano N."/>
            <person name="Nakauchi H."/>
            <person name="Ng P."/>
            <person name="Nilsson R."/>
            <person name="Nishiguchi S."/>
            <person name="Nishikawa S."/>
            <person name="Nori F."/>
            <person name="Ohara O."/>
            <person name="Okazaki Y."/>
            <person name="Orlando V."/>
            <person name="Pang K.C."/>
            <person name="Pavan W.J."/>
            <person name="Pavesi G."/>
            <person name="Pesole G."/>
            <person name="Petrovsky N."/>
            <person name="Piazza S."/>
            <person name="Reed J."/>
            <person name="Reid J.F."/>
            <person name="Ring B.Z."/>
            <person name="Ringwald M."/>
            <person name="Rost B."/>
            <person name="Ruan Y."/>
            <person name="Salzberg S.L."/>
            <person name="Sandelin A."/>
            <person name="Schneider C."/>
            <person name="Schoenbach C."/>
            <person name="Sekiguchi K."/>
            <person name="Semple C.A."/>
            <person name="Seno S."/>
            <person name="Sessa L."/>
            <person name="Sheng Y."/>
            <person name="Shibata Y."/>
            <person name="Shimada H."/>
            <person name="Shimada K."/>
            <person name="Silva D."/>
            <person name="Sinclair B."/>
            <person name="Sperling S."/>
            <person name="Stupka E."/>
            <person name="Sugiura K."/>
            <person name="Sultana R."/>
            <person name="Takenaka Y."/>
            <person name="Taki K."/>
            <person name="Tammoja K."/>
            <person name="Tan S.L."/>
            <person name="Tang S."/>
            <person name="Taylor M.S."/>
            <person name="Tegner J."/>
            <person name="Teichmann S.A."/>
            <person name="Ueda H.R."/>
            <person name="van Nimwegen E."/>
            <person name="Verardo R."/>
            <person name="Wei C.L."/>
            <person name="Yagi K."/>
            <person name="Yamanishi H."/>
            <person name="Zabarovsky E."/>
            <person name="Zhu S."/>
            <person name="Zimmer A."/>
            <person name="Hide W."/>
            <person name="Bult C."/>
            <person name="Grimmond S.M."/>
            <person name="Teasdale R.D."/>
            <person name="Liu E.T."/>
            <person name="Brusic V."/>
            <person name="Quackenbush J."/>
            <person name="Wahlestedt C."/>
            <person name="Mattick J.S."/>
            <person name="Hume D.A."/>
            <person name="Kai C."/>
            <person name="Sasaki D."/>
            <person name="Tomaru Y."/>
            <person name="Fukuda S."/>
            <person name="Kanamori-Katayama M."/>
            <person name="Suzuki M."/>
            <person name="Aoki J."/>
            <person name="Arakawa T."/>
            <person name="Iida J."/>
            <person name="Imamura K."/>
            <person name="Itoh M."/>
            <person name="Kato T."/>
            <person name="Kawaji H."/>
            <person name="Kawagashira N."/>
            <person name="Kawashima T."/>
            <person name="Kojima M."/>
            <person name="Kondo S."/>
            <person name="Konno H."/>
            <person name="Nakano K."/>
            <person name="Ninomiya N."/>
            <person name="Nishio T."/>
            <person name="Okada M."/>
            <person name="Plessy C."/>
            <person name="Shibata K."/>
            <person name="Shiraki T."/>
            <person name="Suzuki S."/>
            <person name="Tagami M."/>
            <person name="Waki K."/>
            <person name="Watahiki A."/>
            <person name="Okamura-Oho Y."/>
            <person name="Suzuki H."/>
            <person name="Kawai J."/>
            <person name="Hayashizaki Y."/>
        </authorList>
    </citation>
    <scope>NUCLEOTIDE SEQUENCE [LARGE SCALE MRNA] (ISOFORM 2)</scope>
    <source>
        <strain>C57BL/6J</strain>
        <tissue>Cerebellum</tissue>
    </source>
</reference>
<reference key="4">
    <citation type="journal article" date="2009" name="PLoS Biol.">
        <title>Lineage-specific biology revealed by a finished genome assembly of the mouse.</title>
        <authorList>
            <person name="Church D.M."/>
            <person name="Goodstadt L."/>
            <person name="Hillier L.W."/>
            <person name="Zody M.C."/>
            <person name="Goldstein S."/>
            <person name="She X."/>
            <person name="Bult C.J."/>
            <person name="Agarwala R."/>
            <person name="Cherry J.L."/>
            <person name="DiCuccio M."/>
            <person name="Hlavina W."/>
            <person name="Kapustin Y."/>
            <person name="Meric P."/>
            <person name="Maglott D."/>
            <person name="Birtle Z."/>
            <person name="Marques A.C."/>
            <person name="Graves T."/>
            <person name="Zhou S."/>
            <person name="Teague B."/>
            <person name="Potamousis K."/>
            <person name="Churas C."/>
            <person name="Place M."/>
            <person name="Herschleb J."/>
            <person name="Runnheim R."/>
            <person name="Forrest D."/>
            <person name="Amos-Landgraf J."/>
            <person name="Schwartz D.C."/>
            <person name="Cheng Z."/>
            <person name="Lindblad-Toh K."/>
            <person name="Eichler E.E."/>
            <person name="Ponting C.P."/>
        </authorList>
    </citation>
    <scope>NUCLEOTIDE SEQUENCE [LARGE SCALE GENOMIC DNA]</scope>
    <source>
        <strain>C57BL/6J</strain>
    </source>
</reference>
<reference key="5">
    <citation type="submission" date="2005-07" db="EMBL/GenBank/DDBJ databases">
        <authorList>
            <person name="Mural R.J."/>
            <person name="Adams M.D."/>
            <person name="Myers E.W."/>
            <person name="Smith H.O."/>
            <person name="Venter J.C."/>
        </authorList>
    </citation>
    <scope>NUCLEOTIDE SEQUENCE [LARGE SCALE GENOMIC DNA]</scope>
</reference>
<reference key="6">
    <citation type="journal article" date="2004" name="Genome Res.">
        <title>The status, quality, and expansion of the NIH full-length cDNA project: the Mammalian Gene Collection (MGC).</title>
        <authorList>
            <consortium name="The MGC Project Team"/>
        </authorList>
    </citation>
    <scope>NUCLEOTIDE SEQUENCE [LARGE SCALE MRNA] (ISOFORM 2)</scope>
    <source>
        <tissue>Brain</tissue>
    </source>
</reference>
<reference key="7">
    <citation type="journal article" date="2008" name="J. Proteome Res.">
        <title>Large-scale identification and evolution indexing of tyrosine phosphorylation sites from murine brain.</title>
        <authorList>
            <person name="Ballif B.A."/>
            <person name="Carey G.R."/>
            <person name="Sunyaev S.R."/>
            <person name="Gygi S.P."/>
        </authorList>
    </citation>
    <scope>PHOSPHORYLATION [LARGE SCALE ANALYSIS] AT TYR-441</scope>
    <scope>IDENTIFICATION BY MASS SPECTROMETRY [LARGE SCALE ANALYSIS]</scope>
    <source>
        <tissue>Brain</tissue>
    </source>
</reference>
<reference key="8">
    <citation type="journal article" date="2016" name="J. Biol. Chem.">
        <title>Gamma-aminobutyric acid type A (GABAA) receptor subunits play a direct structural role in synaptic contact formation via their N-terminal extracellular domains.</title>
        <authorList>
            <person name="Brown L.E."/>
            <person name="Nicholson M.W."/>
            <person name="Arama J.E."/>
            <person name="Mercer A."/>
            <person name="Thomson A.M."/>
            <person name="Jovanovic J.N."/>
        </authorList>
    </citation>
    <scope>FUNCTION</scope>
    <scope>GLYCOSYLATION</scope>
    <scope>DOMAIN EXTRACELLULAR</scope>
</reference>
<keyword id="KW-0002">3D-structure</keyword>
<keyword id="KW-0025">Alternative splicing</keyword>
<keyword id="KW-1003">Cell membrane</keyword>
<keyword id="KW-0868">Chloride</keyword>
<keyword id="KW-0869">Chloride channel</keyword>
<keyword id="KW-0968">Cytoplasmic vesicle</keyword>
<keyword id="KW-1015">Disulfide bond</keyword>
<keyword id="KW-0325">Glycoprotein</keyword>
<keyword id="KW-0407">Ion channel</keyword>
<keyword id="KW-0406">Ion transport</keyword>
<keyword id="KW-1071">Ligand-gated ion channel</keyword>
<keyword id="KW-0472">Membrane</keyword>
<keyword id="KW-0597">Phosphoprotein</keyword>
<keyword id="KW-0628">Postsynaptic cell membrane</keyword>
<keyword id="KW-0675">Receptor</keyword>
<keyword id="KW-1185">Reference proteome</keyword>
<keyword id="KW-0732">Signal</keyword>
<keyword id="KW-0770">Synapse</keyword>
<keyword id="KW-0812">Transmembrane</keyword>
<keyword id="KW-1133">Transmembrane helix</keyword>
<keyword id="KW-0813">Transport</keyword>
<dbReference type="EMBL" id="U14419">
    <property type="protein sequence ID" value="AAA79974.1"/>
    <property type="molecule type" value="mRNA"/>
</dbReference>
<dbReference type="EMBL" id="GU086167">
    <property type="protein sequence ID" value="ACY69098.1"/>
    <property type="molecule type" value="mRNA"/>
</dbReference>
<dbReference type="EMBL" id="AK090279">
    <property type="protein sequence ID" value="BAC41155.1"/>
    <property type="molecule type" value="mRNA"/>
</dbReference>
<dbReference type="EMBL" id="AL627444">
    <property type="status" value="NOT_ANNOTATED_CDS"/>
    <property type="molecule type" value="Genomic_DNA"/>
</dbReference>
<dbReference type="EMBL" id="AL645964">
    <property type="status" value="NOT_ANNOTATED_CDS"/>
    <property type="molecule type" value="Genomic_DNA"/>
</dbReference>
<dbReference type="EMBL" id="CH466609">
    <property type="protein sequence ID" value="EDL32344.1"/>
    <property type="molecule type" value="Genomic_DNA"/>
</dbReference>
<dbReference type="EMBL" id="BC145973">
    <property type="protein sequence ID" value="AAI45974.1"/>
    <property type="molecule type" value="mRNA"/>
</dbReference>
<dbReference type="EMBL" id="BC145975">
    <property type="protein sequence ID" value="AAI45976.1"/>
    <property type="molecule type" value="mRNA"/>
</dbReference>
<dbReference type="CCDS" id="CCDS24555.1">
    <molecule id="P63137-2"/>
</dbReference>
<dbReference type="CCDS" id="CCDS88146.1">
    <molecule id="P63137-1"/>
</dbReference>
<dbReference type="PIR" id="S53531">
    <property type="entry name" value="S53531"/>
</dbReference>
<dbReference type="RefSeq" id="NP_001334243.1">
    <molecule id="P63137-1"/>
    <property type="nucleotide sequence ID" value="NM_001347314.3"/>
</dbReference>
<dbReference type="RefSeq" id="NP_001349575.1">
    <molecule id="P63137-2"/>
    <property type="nucleotide sequence ID" value="NM_001362646.2"/>
</dbReference>
<dbReference type="RefSeq" id="NP_001349576.1">
    <molecule id="P63137-2"/>
    <property type="nucleotide sequence ID" value="NM_001362647.2"/>
</dbReference>
<dbReference type="RefSeq" id="NP_032096.1">
    <molecule id="P63137-2"/>
    <property type="nucleotide sequence ID" value="NM_008070.5"/>
</dbReference>
<dbReference type="RefSeq" id="XP_011247028.1">
    <property type="nucleotide sequence ID" value="XM_011248726.1"/>
</dbReference>
<dbReference type="RefSeq" id="XP_017169750.1">
    <property type="nucleotide sequence ID" value="XM_017314261.1"/>
</dbReference>
<dbReference type="RefSeq" id="XP_030101420.1">
    <molecule id="P63137-1"/>
    <property type="nucleotide sequence ID" value="XM_030245560.1"/>
</dbReference>
<dbReference type="PDB" id="8FOI">
    <property type="method" value="EM"/>
    <property type="resolution" value="2.50 A"/>
    <property type="chains" value="B/E=1-512"/>
</dbReference>
<dbReference type="PDB" id="8G4N">
    <property type="method" value="EM"/>
    <property type="resolution" value="2.67 A"/>
    <property type="chains" value="B/E=1-512"/>
</dbReference>
<dbReference type="PDB" id="8G4O">
    <property type="method" value="EM"/>
    <property type="resolution" value="3.06 A"/>
    <property type="chains" value="B/E=1-512"/>
</dbReference>
<dbReference type="PDB" id="8G4X">
    <property type="method" value="EM"/>
    <property type="resolution" value="2.56 A"/>
    <property type="chains" value="B/E=1-512"/>
</dbReference>
<dbReference type="PDB" id="8G5F">
    <property type="method" value="EM"/>
    <property type="resolution" value="2.64 A"/>
    <property type="chains" value="B/E=1-512"/>
</dbReference>
<dbReference type="PDB" id="8G5G">
    <property type="method" value="EM"/>
    <property type="resolution" value="2.94 A"/>
    <property type="chains" value="B/E=1-512"/>
</dbReference>
<dbReference type="PDB" id="8G5H">
    <property type="method" value="EM"/>
    <property type="resolution" value="2.89 A"/>
    <property type="chains" value="B/E=1-512"/>
</dbReference>
<dbReference type="PDBsum" id="8FOI"/>
<dbReference type="PDBsum" id="8G4N"/>
<dbReference type="PDBsum" id="8G4O"/>
<dbReference type="PDBsum" id="8G4X"/>
<dbReference type="PDBsum" id="8G5F"/>
<dbReference type="PDBsum" id="8G5G"/>
<dbReference type="PDBsum" id="8G5H"/>
<dbReference type="EMDB" id="EMD-29350"/>
<dbReference type="EMDB" id="EMD-29727"/>
<dbReference type="EMDB" id="EMD-29728"/>
<dbReference type="EMDB" id="EMD-29733"/>
<dbReference type="EMDB" id="EMD-29741"/>
<dbReference type="EMDB" id="EMD-29742"/>
<dbReference type="EMDB" id="EMD-29743"/>
<dbReference type="SMR" id="P63137"/>
<dbReference type="BioGRID" id="199803">
    <property type="interactions" value="7"/>
</dbReference>
<dbReference type="ComplexPortal" id="CPX-2979">
    <property type="entry name" value="GABA-A receptor, alpha1-beta2-gamma2"/>
</dbReference>
<dbReference type="ComplexPortal" id="CPX-2987">
    <property type="entry name" value="GABA-A receptor, alpha6-beta2-delta"/>
</dbReference>
<dbReference type="ComplexPortal" id="CPX-2988">
    <property type="entry name" value="GABA-A receptor, alpha4-beta2-delta"/>
</dbReference>
<dbReference type="FunCoup" id="P63137">
    <property type="interactions" value="633"/>
</dbReference>
<dbReference type="IntAct" id="P63137">
    <property type="interactions" value="1"/>
</dbReference>
<dbReference type="MINT" id="P63137"/>
<dbReference type="STRING" id="10090.ENSMUSP00000007797"/>
<dbReference type="ChEMBL" id="CHEMBL4296059"/>
<dbReference type="GlyConnect" id="2325">
    <property type="glycosylation" value="6 N-Linked glycans (1 site)"/>
</dbReference>
<dbReference type="GlyCosmos" id="P63137">
    <property type="glycosylation" value="3 sites, 6 glycans"/>
</dbReference>
<dbReference type="GlyGen" id="P63137">
    <property type="glycosylation" value="4 sites, 6 N-linked glycans (1 site), 1 O-linked glycan (1 site)"/>
</dbReference>
<dbReference type="iPTMnet" id="P63137"/>
<dbReference type="PhosphoSitePlus" id="P63137"/>
<dbReference type="SwissPalm" id="P63137"/>
<dbReference type="PaxDb" id="10090-ENSMUSP00000007797"/>
<dbReference type="PeptideAtlas" id="P63137"/>
<dbReference type="ProteomicsDB" id="267774">
    <molecule id="P63137-1"/>
</dbReference>
<dbReference type="ProteomicsDB" id="267775">
    <molecule id="P63137-2"/>
</dbReference>
<dbReference type="Antibodypedia" id="4534">
    <property type="antibodies" value="334 antibodies from 34 providers"/>
</dbReference>
<dbReference type="DNASU" id="14401"/>
<dbReference type="Ensembl" id="ENSMUST00000007797.10">
    <molecule id="P63137-2"/>
    <property type="protein sequence ID" value="ENSMUSP00000007797.5"/>
    <property type="gene ID" value="ENSMUSG00000007653.13"/>
</dbReference>
<dbReference type="Ensembl" id="ENSMUST00000192403.2">
    <molecule id="P63137-1"/>
    <property type="protein sequence ID" value="ENSMUSP00000141868.2"/>
    <property type="gene ID" value="ENSMUSG00000007653.13"/>
</dbReference>
<dbReference type="GeneID" id="14401"/>
<dbReference type="KEGG" id="mmu:14401"/>
<dbReference type="UCSC" id="uc007imi.1">
    <molecule id="P63137-2"/>
    <property type="organism name" value="mouse"/>
</dbReference>
<dbReference type="UCSC" id="uc011xte.1">
    <molecule id="P63137-1"/>
    <property type="organism name" value="mouse"/>
</dbReference>
<dbReference type="AGR" id="MGI:95620"/>
<dbReference type="CTD" id="2561"/>
<dbReference type="MGI" id="MGI:95620">
    <property type="gene designation" value="Gabrb2"/>
</dbReference>
<dbReference type="VEuPathDB" id="HostDB:ENSMUSG00000007653"/>
<dbReference type="eggNOG" id="KOG3643">
    <property type="taxonomic scope" value="Eukaryota"/>
</dbReference>
<dbReference type="GeneTree" id="ENSGT00940000154245"/>
<dbReference type="HOGENOM" id="CLU_010920_1_4_1"/>
<dbReference type="InParanoid" id="P63137"/>
<dbReference type="OMA" id="INKMDPH"/>
<dbReference type="OrthoDB" id="8890589at2759"/>
<dbReference type="PhylomeDB" id="P63137"/>
<dbReference type="TreeFam" id="TF315453"/>
<dbReference type="Reactome" id="R-MMU-977443">
    <property type="pathway name" value="GABA receptor activation"/>
</dbReference>
<dbReference type="BioGRID-ORCS" id="14401">
    <property type="hits" value="2 hits in 78 CRISPR screens"/>
</dbReference>
<dbReference type="CD-CODE" id="CE726F99">
    <property type="entry name" value="Postsynaptic density"/>
</dbReference>
<dbReference type="ChiTaRS" id="Gabrb2">
    <property type="organism name" value="mouse"/>
</dbReference>
<dbReference type="PRO" id="PR:P63137"/>
<dbReference type="Proteomes" id="UP000000589">
    <property type="component" value="Chromosome 11"/>
</dbReference>
<dbReference type="RNAct" id="P63137">
    <property type="molecule type" value="protein"/>
</dbReference>
<dbReference type="Bgee" id="ENSMUSG00000007653">
    <property type="expression patterns" value="Expressed in lateral geniculate body and 136 other cell types or tissues"/>
</dbReference>
<dbReference type="GO" id="GO:0034707">
    <property type="term" value="C:chloride channel complex"/>
    <property type="evidence" value="ECO:0007669"/>
    <property type="project" value="UniProtKB-KW"/>
</dbReference>
<dbReference type="GO" id="GO:0031410">
    <property type="term" value="C:cytoplasmic vesicle"/>
    <property type="evidence" value="ECO:0007669"/>
    <property type="project" value="UniProtKB-KW"/>
</dbReference>
<dbReference type="GO" id="GO:0043197">
    <property type="term" value="C:dendritic spine"/>
    <property type="evidence" value="ECO:0007669"/>
    <property type="project" value="Ensembl"/>
</dbReference>
<dbReference type="GO" id="GO:1902711">
    <property type="term" value="C:GABA-A receptor complex"/>
    <property type="evidence" value="ECO:0000250"/>
    <property type="project" value="UniProtKB"/>
</dbReference>
<dbReference type="GO" id="GO:0098982">
    <property type="term" value="C:GABA-ergic synapse"/>
    <property type="evidence" value="ECO:0000314"/>
    <property type="project" value="SynGO"/>
</dbReference>
<dbReference type="GO" id="GO:0005886">
    <property type="term" value="C:plasma membrane"/>
    <property type="evidence" value="ECO:0000250"/>
    <property type="project" value="UniProtKB"/>
</dbReference>
<dbReference type="GO" id="GO:0099634">
    <property type="term" value="C:postsynaptic specialization membrane"/>
    <property type="evidence" value="ECO:0000314"/>
    <property type="project" value="SynGO"/>
</dbReference>
<dbReference type="GO" id="GO:0005254">
    <property type="term" value="F:chloride channel activity"/>
    <property type="evidence" value="ECO:0000250"/>
    <property type="project" value="UniProtKB"/>
</dbReference>
<dbReference type="GO" id="GO:0004890">
    <property type="term" value="F:GABA-A receptor activity"/>
    <property type="evidence" value="ECO:0000250"/>
    <property type="project" value="UniProtKB"/>
</dbReference>
<dbReference type="GO" id="GO:0022851">
    <property type="term" value="F:GABA-gated chloride ion channel activity"/>
    <property type="evidence" value="ECO:0007669"/>
    <property type="project" value="Ensembl"/>
</dbReference>
<dbReference type="GO" id="GO:1904315">
    <property type="term" value="F:transmitter-gated monoatomic ion channel activity involved in regulation of postsynaptic membrane potential"/>
    <property type="evidence" value="ECO:0000314"/>
    <property type="project" value="SynGO"/>
</dbReference>
<dbReference type="GO" id="GO:0071420">
    <property type="term" value="P:cellular response to histamine"/>
    <property type="evidence" value="ECO:0000250"/>
    <property type="project" value="UniProtKB"/>
</dbReference>
<dbReference type="GO" id="GO:1902476">
    <property type="term" value="P:chloride transmembrane transport"/>
    <property type="evidence" value="ECO:0000250"/>
    <property type="project" value="UniProtKB"/>
</dbReference>
<dbReference type="GO" id="GO:0090102">
    <property type="term" value="P:cochlea development"/>
    <property type="evidence" value="ECO:0000315"/>
    <property type="project" value="DFLAT"/>
</dbReference>
<dbReference type="GO" id="GO:0007214">
    <property type="term" value="P:gamma-aminobutyric acid signaling pathway"/>
    <property type="evidence" value="ECO:0000266"/>
    <property type="project" value="ComplexPortal"/>
</dbReference>
<dbReference type="GO" id="GO:1904862">
    <property type="term" value="P:inhibitory synapse assembly"/>
    <property type="evidence" value="ECO:0000314"/>
    <property type="project" value="UniProtKB"/>
</dbReference>
<dbReference type="GO" id="GO:0060119">
    <property type="term" value="P:inner ear receptor cell development"/>
    <property type="evidence" value="ECO:0000315"/>
    <property type="project" value="DFLAT"/>
</dbReference>
<dbReference type="GO" id="GO:0060384">
    <property type="term" value="P:innervation"/>
    <property type="evidence" value="ECO:0000315"/>
    <property type="project" value="DFLAT"/>
</dbReference>
<dbReference type="GO" id="GO:0048666">
    <property type="term" value="P:neuron development"/>
    <property type="evidence" value="ECO:0000315"/>
    <property type="project" value="DFLAT"/>
</dbReference>
<dbReference type="GO" id="GO:0051932">
    <property type="term" value="P:synaptic transmission, GABAergic"/>
    <property type="evidence" value="ECO:0000303"/>
    <property type="project" value="ComplexPortal"/>
</dbReference>
<dbReference type="CDD" id="cd18999">
    <property type="entry name" value="LGIC_ECD_GABAAR_B"/>
    <property type="match status" value="1"/>
</dbReference>
<dbReference type="CDD" id="cd19053">
    <property type="entry name" value="LGIC_TM_GABAAR_beta"/>
    <property type="match status" value="1"/>
</dbReference>
<dbReference type="FunFam" id="1.20.58.390:FF:000097">
    <property type="entry name" value="Gamma-aminobutyric acid (GABA) A receptor, beta 2"/>
    <property type="match status" value="1"/>
</dbReference>
<dbReference type="FunFam" id="2.70.170.10:FF:000004">
    <property type="entry name" value="Gamma-aminobutyric acid receptor subunit beta-2 isoform A"/>
    <property type="match status" value="1"/>
</dbReference>
<dbReference type="Gene3D" id="2.70.170.10">
    <property type="entry name" value="Neurotransmitter-gated ion-channel ligand-binding domain"/>
    <property type="match status" value="1"/>
</dbReference>
<dbReference type="Gene3D" id="1.20.58.390">
    <property type="entry name" value="Neurotransmitter-gated ion-channel transmembrane domain"/>
    <property type="match status" value="1"/>
</dbReference>
<dbReference type="InterPro" id="IPR006028">
    <property type="entry name" value="GABAA/Glycine_rcpt"/>
</dbReference>
<dbReference type="InterPro" id="IPR002289">
    <property type="entry name" value="GABAAb_rcpt"/>
</dbReference>
<dbReference type="InterPro" id="IPR006202">
    <property type="entry name" value="Neur_chan_lig-bd"/>
</dbReference>
<dbReference type="InterPro" id="IPR036734">
    <property type="entry name" value="Neur_chan_lig-bd_sf"/>
</dbReference>
<dbReference type="InterPro" id="IPR006201">
    <property type="entry name" value="Neur_channel"/>
</dbReference>
<dbReference type="InterPro" id="IPR036719">
    <property type="entry name" value="Neuro-gated_channel_TM_sf"/>
</dbReference>
<dbReference type="InterPro" id="IPR038050">
    <property type="entry name" value="Neuro_actylchol_rec"/>
</dbReference>
<dbReference type="InterPro" id="IPR006029">
    <property type="entry name" value="Neurotrans-gated_channel_TM"/>
</dbReference>
<dbReference type="InterPro" id="IPR018000">
    <property type="entry name" value="Neurotransmitter_ion_chnl_CS"/>
</dbReference>
<dbReference type="NCBIfam" id="TIGR00860">
    <property type="entry name" value="LIC"/>
    <property type="match status" value="1"/>
</dbReference>
<dbReference type="PANTHER" id="PTHR18945">
    <property type="entry name" value="NEUROTRANSMITTER GATED ION CHANNEL"/>
    <property type="match status" value="1"/>
</dbReference>
<dbReference type="Pfam" id="PF02931">
    <property type="entry name" value="Neur_chan_LBD"/>
    <property type="match status" value="1"/>
</dbReference>
<dbReference type="Pfam" id="PF02932">
    <property type="entry name" value="Neur_chan_memb"/>
    <property type="match status" value="1"/>
</dbReference>
<dbReference type="PRINTS" id="PR01160">
    <property type="entry name" value="GABAARBETA"/>
</dbReference>
<dbReference type="PRINTS" id="PR00253">
    <property type="entry name" value="GABAARECEPTR"/>
</dbReference>
<dbReference type="PRINTS" id="PR00252">
    <property type="entry name" value="NRIONCHANNEL"/>
</dbReference>
<dbReference type="SUPFAM" id="SSF90112">
    <property type="entry name" value="Neurotransmitter-gated ion-channel transmembrane pore"/>
    <property type="match status" value="1"/>
</dbReference>
<dbReference type="SUPFAM" id="SSF63712">
    <property type="entry name" value="Nicotinic receptor ligand binding domain-like"/>
    <property type="match status" value="1"/>
</dbReference>
<dbReference type="PROSITE" id="PS00236">
    <property type="entry name" value="NEUROTR_ION_CHANNEL"/>
    <property type="match status" value="1"/>
</dbReference>